<keyword id="KW-0963">Cytoplasm</keyword>
<keyword id="KW-0378">Hydrolase</keyword>
<keyword id="KW-0694">RNA-binding</keyword>
<keyword id="KW-0820">tRNA-binding</keyword>
<name>PTH_SYNSC</name>
<protein>
    <recommendedName>
        <fullName evidence="1">Peptidyl-tRNA hydrolase</fullName>
        <shortName evidence="1">Pth</shortName>
        <ecNumber evidence="1">3.1.1.29</ecNumber>
    </recommendedName>
</protein>
<organism>
    <name type="scientific">Synechococcus sp. (strain CC9605)</name>
    <dbReference type="NCBI Taxonomy" id="110662"/>
    <lineage>
        <taxon>Bacteria</taxon>
        <taxon>Bacillati</taxon>
        <taxon>Cyanobacteriota</taxon>
        <taxon>Cyanophyceae</taxon>
        <taxon>Synechococcales</taxon>
        <taxon>Synechococcaceae</taxon>
        <taxon>Synechococcus</taxon>
    </lineage>
</organism>
<dbReference type="EC" id="3.1.1.29" evidence="1"/>
<dbReference type="EMBL" id="CP000110">
    <property type="protein sequence ID" value="ABB34041.1"/>
    <property type="molecule type" value="Genomic_DNA"/>
</dbReference>
<dbReference type="RefSeq" id="WP_011363293.1">
    <property type="nucleotide sequence ID" value="NC_007516.1"/>
</dbReference>
<dbReference type="SMR" id="Q3AMZ1"/>
<dbReference type="STRING" id="110662.Syncc9605_0265"/>
<dbReference type="KEGG" id="syd:Syncc9605_0265"/>
<dbReference type="eggNOG" id="COG0193">
    <property type="taxonomic scope" value="Bacteria"/>
</dbReference>
<dbReference type="HOGENOM" id="CLU_062456_4_1_3"/>
<dbReference type="OrthoDB" id="9800507at2"/>
<dbReference type="GO" id="GO:0005737">
    <property type="term" value="C:cytoplasm"/>
    <property type="evidence" value="ECO:0007669"/>
    <property type="project" value="UniProtKB-SubCell"/>
</dbReference>
<dbReference type="GO" id="GO:0004045">
    <property type="term" value="F:peptidyl-tRNA hydrolase activity"/>
    <property type="evidence" value="ECO:0007669"/>
    <property type="project" value="UniProtKB-UniRule"/>
</dbReference>
<dbReference type="GO" id="GO:0000049">
    <property type="term" value="F:tRNA binding"/>
    <property type="evidence" value="ECO:0007669"/>
    <property type="project" value="UniProtKB-UniRule"/>
</dbReference>
<dbReference type="GO" id="GO:0006515">
    <property type="term" value="P:protein quality control for misfolded or incompletely synthesized proteins"/>
    <property type="evidence" value="ECO:0007669"/>
    <property type="project" value="UniProtKB-UniRule"/>
</dbReference>
<dbReference type="GO" id="GO:0072344">
    <property type="term" value="P:rescue of stalled ribosome"/>
    <property type="evidence" value="ECO:0007669"/>
    <property type="project" value="UniProtKB-UniRule"/>
</dbReference>
<dbReference type="CDD" id="cd00462">
    <property type="entry name" value="PTH"/>
    <property type="match status" value="1"/>
</dbReference>
<dbReference type="FunFam" id="3.40.50.1470:FF:000001">
    <property type="entry name" value="Peptidyl-tRNA hydrolase"/>
    <property type="match status" value="1"/>
</dbReference>
<dbReference type="Gene3D" id="3.40.50.1470">
    <property type="entry name" value="Peptidyl-tRNA hydrolase"/>
    <property type="match status" value="1"/>
</dbReference>
<dbReference type="HAMAP" id="MF_00083">
    <property type="entry name" value="Pept_tRNA_hydro_bact"/>
    <property type="match status" value="1"/>
</dbReference>
<dbReference type="InterPro" id="IPR001328">
    <property type="entry name" value="Pept_tRNA_hydro"/>
</dbReference>
<dbReference type="InterPro" id="IPR018171">
    <property type="entry name" value="Pept_tRNA_hydro_CS"/>
</dbReference>
<dbReference type="InterPro" id="IPR036416">
    <property type="entry name" value="Pept_tRNA_hydro_sf"/>
</dbReference>
<dbReference type="NCBIfam" id="TIGR00447">
    <property type="entry name" value="pth"/>
    <property type="match status" value="1"/>
</dbReference>
<dbReference type="PANTHER" id="PTHR17224">
    <property type="entry name" value="PEPTIDYL-TRNA HYDROLASE"/>
    <property type="match status" value="1"/>
</dbReference>
<dbReference type="PANTHER" id="PTHR17224:SF1">
    <property type="entry name" value="PEPTIDYL-TRNA HYDROLASE"/>
    <property type="match status" value="1"/>
</dbReference>
<dbReference type="Pfam" id="PF01195">
    <property type="entry name" value="Pept_tRNA_hydro"/>
    <property type="match status" value="1"/>
</dbReference>
<dbReference type="SUPFAM" id="SSF53178">
    <property type="entry name" value="Peptidyl-tRNA hydrolase-like"/>
    <property type="match status" value="1"/>
</dbReference>
<dbReference type="PROSITE" id="PS01195">
    <property type="entry name" value="PEPT_TRNA_HYDROL_1"/>
    <property type="match status" value="1"/>
</dbReference>
<dbReference type="PROSITE" id="PS01196">
    <property type="entry name" value="PEPT_TRNA_HYDROL_2"/>
    <property type="match status" value="1"/>
</dbReference>
<reference key="1">
    <citation type="submission" date="2005-07" db="EMBL/GenBank/DDBJ databases">
        <title>Complete sequence of Synechococcus sp. CC9605.</title>
        <authorList>
            <consortium name="US DOE Joint Genome Institute"/>
            <person name="Copeland A."/>
            <person name="Lucas S."/>
            <person name="Lapidus A."/>
            <person name="Barry K."/>
            <person name="Detter J.C."/>
            <person name="Glavina T."/>
            <person name="Hammon N."/>
            <person name="Israni S."/>
            <person name="Pitluck S."/>
            <person name="Schmutz J."/>
            <person name="Martinez M."/>
            <person name="Larimer F."/>
            <person name="Land M."/>
            <person name="Kyrpides N."/>
            <person name="Ivanova N."/>
            <person name="Richardson P."/>
        </authorList>
    </citation>
    <scope>NUCLEOTIDE SEQUENCE [LARGE SCALE GENOMIC DNA]</scope>
    <source>
        <strain>CC9605</strain>
    </source>
</reference>
<gene>
    <name evidence="1" type="primary">pth</name>
    <name type="ordered locus">Syncc9605_0265</name>
</gene>
<comment type="function">
    <text evidence="1">Hydrolyzes ribosome-free peptidyl-tRNAs (with 1 or more amino acids incorporated), which drop off the ribosome during protein synthesis, or as a result of ribosome stalling.</text>
</comment>
<comment type="function">
    <text evidence="1">Catalyzes the release of premature peptidyl moieties from peptidyl-tRNA molecules trapped in stalled 50S ribosomal subunits, and thus maintains levels of free tRNAs and 50S ribosomes.</text>
</comment>
<comment type="catalytic activity">
    <reaction evidence="1">
        <text>an N-acyl-L-alpha-aminoacyl-tRNA + H2O = an N-acyl-L-amino acid + a tRNA + H(+)</text>
        <dbReference type="Rhea" id="RHEA:54448"/>
        <dbReference type="Rhea" id="RHEA-COMP:10123"/>
        <dbReference type="Rhea" id="RHEA-COMP:13883"/>
        <dbReference type="ChEBI" id="CHEBI:15377"/>
        <dbReference type="ChEBI" id="CHEBI:15378"/>
        <dbReference type="ChEBI" id="CHEBI:59874"/>
        <dbReference type="ChEBI" id="CHEBI:78442"/>
        <dbReference type="ChEBI" id="CHEBI:138191"/>
        <dbReference type="EC" id="3.1.1.29"/>
    </reaction>
</comment>
<comment type="subunit">
    <text evidence="1">Monomer.</text>
</comment>
<comment type="subcellular location">
    <subcellularLocation>
        <location evidence="1">Cytoplasm</location>
    </subcellularLocation>
</comment>
<comment type="similarity">
    <text evidence="1">Belongs to the PTH family.</text>
</comment>
<feature type="chain" id="PRO_0000264124" description="Peptidyl-tRNA hydrolase">
    <location>
        <begin position="1"/>
        <end position="205"/>
    </location>
</feature>
<feature type="active site" description="Proton acceptor" evidence="1">
    <location>
        <position position="23"/>
    </location>
</feature>
<feature type="binding site" evidence="1">
    <location>
        <position position="18"/>
    </location>
    <ligand>
        <name>tRNA</name>
        <dbReference type="ChEBI" id="CHEBI:17843"/>
    </ligand>
</feature>
<feature type="binding site" evidence="1">
    <location>
        <position position="69"/>
    </location>
    <ligand>
        <name>tRNA</name>
        <dbReference type="ChEBI" id="CHEBI:17843"/>
    </ligand>
</feature>
<feature type="binding site" evidence="1">
    <location>
        <position position="71"/>
    </location>
    <ligand>
        <name>tRNA</name>
        <dbReference type="ChEBI" id="CHEBI:17843"/>
    </ligand>
</feature>
<feature type="binding site" evidence="1">
    <location>
        <position position="117"/>
    </location>
    <ligand>
        <name>tRNA</name>
        <dbReference type="ChEBI" id="CHEBI:17843"/>
    </ligand>
</feature>
<feature type="site" description="Discriminates between blocked and unblocked aminoacyl-tRNA" evidence="1">
    <location>
        <position position="13"/>
    </location>
</feature>
<feature type="site" description="Stabilizes the basic form of H active site to accept a proton" evidence="1">
    <location>
        <position position="96"/>
    </location>
</feature>
<proteinExistence type="inferred from homology"/>
<accession>Q3AMZ1</accession>
<evidence type="ECO:0000255" key="1">
    <source>
        <dbReference type="HAMAP-Rule" id="MF_00083"/>
    </source>
</evidence>
<sequence>MATDLKLVVGLGNPGAKYAGTRHNIGFMALELLGERSGFSFRQQAKLHGLAADTGVGEQRLRLLMPQTYMNDSGRAIRAALDWFGLEPHQLLVLVDDMDLPLGRLRLRAQGSAGGHNGLRSTIQHLGTQAFPRLRIGIGAPAENPAERRVRTVSHVLGPFSKVEQPCVGAVLDAVLDGIQRLQRQSFERAGTWINGFRYDLEPVD</sequence>